<feature type="chain" id="PRO_1000193538" description="Peptide chain release factor 3">
    <location>
        <begin position="1"/>
        <end position="514"/>
    </location>
</feature>
<feature type="domain" description="tr-type G">
    <location>
        <begin position="8"/>
        <end position="268"/>
    </location>
</feature>
<feature type="binding site" evidence="1">
    <location>
        <begin position="17"/>
        <end position="24"/>
    </location>
    <ligand>
        <name>GTP</name>
        <dbReference type="ChEBI" id="CHEBI:37565"/>
    </ligand>
</feature>
<feature type="binding site" evidence="1">
    <location>
        <begin position="85"/>
        <end position="89"/>
    </location>
    <ligand>
        <name>GTP</name>
        <dbReference type="ChEBI" id="CHEBI:37565"/>
    </ligand>
</feature>
<feature type="binding site" evidence="1">
    <location>
        <begin position="139"/>
        <end position="142"/>
    </location>
    <ligand>
        <name>GTP</name>
        <dbReference type="ChEBI" id="CHEBI:37565"/>
    </ligand>
</feature>
<keyword id="KW-0963">Cytoplasm</keyword>
<keyword id="KW-0342">GTP-binding</keyword>
<keyword id="KW-0547">Nucleotide-binding</keyword>
<keyword id="KW-0648">Protein biosynthesis</keyword>
<accession>C1CCK2</accession>
<name>RF3_STRZJ</name>
<organism>
    <name type="scientific">Streptococcus pneumoniae (strain JJA)</name>
    <dbReference type="NCBI Taxonomy" id="488222"/>
    <lineage>
        <taxon>Bacteria</taxon>
        <taxon>Bacillati</taxon>
        <taxon>Bacillota</taxon>
        <taxon>Bacilli</taxon>
        <taxon>Lactobacillales</taxon>
        <taxon>Streptococcaceae</taxon>
        <taxon>Streptococcus</taxon>
    </lineage>
</organism>
<sequence>MNIQEEIKKRRTFAIISHPDAGKTTITEQLLYFGGEIREAGTVKGKKTGTFAKSDWMDIEKQRGISVTSSVMQFDYDGKRVNILDTPGHEDFSEDTYRTLMAVDAAVMVVDSAKGIEAQTKKLFEVVKHRGIPVFTFMNKLDRDGREPLDLLQELEEILGIASYPMNWPIGMGKAFEGLYDLYNQRLELYKGDERFASLEDGDKLFGSNPFYEQVKDDIELLNEAGNEFSEEAILAGELTPVFFGSALTNFGVQTFLEIFLKFAPEPHGHKKTDGEIVDPYDKDFSGFVFKIQANMDPRHRDRIAFVRIVSGEFERGMSVNLPRTGKGAKLSNVTQFMAESRENVINAVAGDIIGVYDTGTYQVGDTLTVGKNKFEFEPLPTFTPEIFMKVSAKNVMKQKSFHKGIEQLVQEGAVQLYKNYQTGEYMLGAVGQLQFEVFKHRMEGEYNAEVVMSPMGKKTVRWIKPEDLDERMSSSRNILAKDRFDQPVFLFENDFALRWFADKYPDVELEEKM</sequence>
<proteinExistence type="inferred from homology"/>
<protein>
    <recommendedName>
        <fullName evidence="1">Peptide chain release factor 3</fullName>
        <shortName evidence="1">RF-3</shortName>
    </recommendedName>
</protein>
<dbReference type="EMBL" id="CP000919">
    <property type="protein sequence ID" value="ACO18678.1"/>
    <property type="molecule type" value="Genomic_DNA"/>
</dbReference>
<dbReference type="RefSeq" id="WP_001025419.1">
    <property type="nucleotide sequence ID" value="NC_012466.1"/>
</dbReference>
<dbReference type="SMR" id="C1CCK2"/>
<dbReference type="KEGG" id="sjj:SPJ_0423"/>
<dbReference type="HOGENOM" id="CLU_002794_2_1_9"/>
<dbReference type="Proteomes" id="UP000002206">
    <property type="component" value="Chromosome"/>
</dbReference>
<dbReference type="GO" id="GO:0005829">
    <property type="term" value="C:cytosol"/>
    <property type="evidence" value="ECO:0007669"/>
    <property type="project" value="TreeGrafter"/>
</dbReference>
<dbReference type="GO" id="GO:0005525">
    <property type="term" value="F:GTP binding"/>
    <property type="evidence" value="ECO:0007669"/>
    <property type="project" value="UniProtKB-UniRule"/>
</dbReference>
<dbReference type="GO" id="GO:0003924">
    <property type="term" value="F:GTPase activity"/>
    <property type="evidence" value="ECO:0007669"/>
    <property type="project" value="InterPro"/>
</dbReference>
<dbReference type="GO" id="GO:0016150">
    <property type="term" value="F:translation release factor activity, codon nonspecific"/>
    <property type="evidence" value="ECO:0007669"/>
    <property type="project" value="TreeGrafter"/>
</dbReference>
<dbReference type="GO" id="GO:0016149">
    <property type="term" value="F:translation release factor activity, codon specific"/>
    <property type="evidence" value="ECO:0007669"/>
    <property type="project" value="UniProtKB-UniRule"/>
</dbReference>
<dbReference type="GO" id="GO:0006449">
    <property type="term" value="P:regulation of translational termination"/>
    <property type="evidence" value="ECO:0007669"/>
    <property type="project" value="UniProtKB-UniRule"/>
</dbReference>
<dbReference type="CDD" id="cd04169">
    <property type="entry name" value="RF3"/>
    <property type="match status" value="1"/>
</dbReference>
<dbReference type="CDD" id="cd16259">
    <property type="entry name" value="RF3_III"/>
    <property type="match status" value="1"/>
</dbReference>
<dbReference type="FunFam" id="2.40.30.10:FF:000040">
    <property type="entry name" value="Peptide chain release factor 3"/>
    <property type="match status" value="1"/>
</dbReference>
<dbReference type="FunFam" id="3.30.70.3280:FF:000001">
    <property type="entry name" value="Peptide chain release factor 3"/>
    <property type="match status" value="1"/>
</dbReference>
<dbReference type="FunFam" id="3.40.50.300:FF:000542">
    <property type="entry name" value="Peptide chain release factor 3"/>
    <property type="match status" value="1"/>
</dbReference>
<dbReference type="Gene3D" id="3.40.50.300">
    <property type="entry name" value="P-loop containing nucleotide triphosphate hydrolases"/>
    <property type="match status" value="1"/>
</dbReference>
<dbReference type="Gene3D" id="3.30.70.3280">
    <property type="entry name" value="Peptide chain release factor 3, domain III"/>
    <property type="match status" value="1"/>
</dbReference>
<dbReference type="Gene3D" id="2.40.30.10">
    <property type="entry name" value="Translation factors"/>
    <property type="match status" value="1"/>
</dbReference>
<dbReference type="HAMAP" id="MF_00072">
    <property type="entry name" value="Rel_fac_3"/>
    <property type="match status" value="1"/>
</dbReference>
<dbReference type="InterPro" id="IPR053905">
    <property type="entry name" value="EF-G-like_DII"/>
</dbReference>
<dbReference type="InterPro" id="IPR035647">
    <property type="entry name" value="EFG_III/V"/>
</dbReference>
<dbReference type="InterPro" id="IPR031157">
    <property type="entry name" value="G_TR_CS"/>
</dbReference>
<dbReference type="InterPro" id="IPR027417">
    <property type="entry name" value="P-loop_NTPase"/>
</dbReference>
<dbReference type="InterPro" id="IPR004548">
    <property type="entry name" value="PrfC"/>
</dbReference>
<dbReference type="InterPro" id="IPR032090">
    <property type="entry name" value="RF3_C"/>
</dbReference>
<dbReference type="InterPro" id="IPR038467">
    <property type="entry name" value="RF3_dom_3_sf"/>
</dbReference>
<dbReference type="InterPro" id="IPR041732">
    <property type="entry name" value="RF3_GTP-bd"/>
</dbReference>
<dbReference type="InterPro" id="IPR005225">
    <property type="entry name" value="Small_GTP-bd"/>
</dbReference>
<dbReference type="InterPro" id="IPR000795">
    <property type="entry name" value="T_Tr_GTP-bd_dom"/>
</dbReference>
<dbReference type="InterPro" id="IPR009000">
    <property type="entry name" value="Transl_B-barrel_sf"/>
</dbReference>
<dbReference type="NCBIfam" id="TIGR00503">
    <property type="entry name" value="prfC"/>
    <property type="match status" value="1"/>
</dbReference>
<dbReference type="NCBIfam" id="NF001964">
    <property type="entry name" value="PRK00741.1"/>
    <property type="match status" value="1"/>
</dbReference>
<dbReference type="NCBIfam" id="TIGR00231">
    <property type="entry name" value="small_GTP"/>
    <property type="match status" value="1"/>
</dbReference>
<dbReference type="PANTHER" id="PTHR43556">
    <property type="entry name" value="PEPTIDE CHAIN RELEASE FACTOR RF3"/>
    <property type="match status" value="1"/>
</dbReference>
<dbReference type="PANTHER" id="PTHR43556:SF2">
    <property type="entry name" value="PEPTIDE CHAIN RELEASE FACTOR RF3"/>
    <property type="match status" value="1"/>
</dbReference>
<dbReference type="Pfam" id="PF22042">
    <property type="entry name" value="EF-G_D2"/>
    <property type="match status" value="1"/>
</dbReference>
<dbReference type="Pfam" id="PF00009">
    <property type="entry name" value="GTP_EFTU"/>
    <property type="match status" value="1"/>
</dbReference>
<dbReference type="Pfam" id="PF16658">
    <property type="entry name" value="RF3_C"/>
    <property type="match status" value="1"/>
</dbReference>
<dbReference type="PRINTS" id="PR00315">
    <property type="entry name" value="ELONGATNFCT"/>
</dbReference>
<dbReference type="PRINTS" id="PR01037">
    <property type="entry name" value="TCRTETOQM"/>
</dbReference>
<dbReference type="SUPFAM" id="SSF54980">
    <property type="entry name" value="EF-G C-terminal domain-like"/>
    <property type="match status" value="1"/>
</dbReference>
<dbReference type="SUPFAM" id="SSF52540">
    <property type="entry name" value="P-loop containing nucleoside triphosphate hydrolases"/>
    <property type="match status" value="1"/>
</dbReference>
<dbReference type="SUPFAM" id="SSF50447">
    <property type="entry name" value="Translation proteins"/>
    <property type="match status" value="1"/>
</dbReference>
<dbReference type="PROSITE" id="PS00301">
    <property type="entry name" value="G_TR_1"/>
    <property type="match status" value="1"/>
</dbReference>
<dbReference type="PROSITE" id="PS51722">
    <property type="entry name" value="G_TR_2"/>
    <property type="match status" value="1"/>
</dbReference>
<evidence type="ECO:0000255" key="1">
    <source>
        <dbReference type="HAMAP-Rule" id="MF_00072"/>
    </source>
</evidence>
<gene>
    <name evidence="1" type="primary">prfC</name>
    <name type="ordered locus">SPJ_0423</name>
</gene>
<reference key="1">
    <citation type="journal article" date="2010" name="Genome Biol.">
        <title>Structure and dynamics of the pan-genome of Streptococcus pneumoniae and closely related species.</title>
        <authorList>
            <person name="Donati C."/>
            <person name="Hiller N.L."/>
            <person name="Tettelin H."/>
            <person name="Muzzi A."/>
            <person name="Croucher N.J."/>
            <person name="Angiuoli S.V."/>
            <person name="Oggioni M."/>
            <person name="Dunning Hotopp J.C."/>
            <person name="Hu F.Z."/>
            <person name="Riley D.R."/>
            <person name="Covacci A."/>
            <person name="Mitchell T.J."/>
            <person name="Bentley S.D."/>
            <person name="Kilian M."/>
            <person name="Ehrlich G.D."/>
            <person name="Rappuoli R."/>
            <person name="Moxon E.R."/>
            <person name="Masignani V."/>
        </authorList>
    </citation>
    <scope>NUCLEOTIDE SEQUENCE [LARGE SCALE GENOMIC DNA]</scope>
    <source>
        <strain>JJA</strain>
    </source>
</reference>
<comment type="function">
    <text evidence="1">Increases the formation of ribosomal termination complexes and stimulates activities of RF-1 and RF-2. It binds guanine nucleotides and has strong preference for UGA stop codons. It may interact directly with the ribosome. The stimulation of RF-1 and RF-2 is significantly reduced by GTP and GDP, but not by GMP.</text>
</comment>
<comment type="subcellular location">
    <subcellularLocation>
        <location evidence="1">Cytoplasm</location>
    </subcellularLocation>
</comment>
<comment type="similarity">
    <text evidence="1">Belongs to the TRAFAC class translation factor GTPase superfamily. Classic translation factor GTPase family. PrfC subfamily.</text>
</comment>